<accession>Q9Z0L1</accession>
<accession>Q3U4H3</accession>
<accession>Q8C6E2</accession>
<accession>Q8K1R9</accession>
<gene>
    <name type="primary">S1pr4</name>
    <name type="synonym">Edg6</name>
    <name type="synonym">Lpc1</name>
    <name type="synonym">S1p4</name>
</gene>
<organism>
    <name type="scientific">Mus musculus</name>
    <name type="common">Mouse</name>
    <dbReference type="NCBI Taxonomy" id="10090"/>
    <lineage>
        <taxon>Eukaryota</taxon>
        <taxon>Metazoa</taxon>
        <taxon>Chordata</taxon>
        <taxon>Craniata</taxon>
        <taxon>Vertebrata</taxon>
        <taxon>Euteleostomi</taxon>
        <taxon>Mammalia</taxon>
        <taxon>Eutheria</taxon>
        <taxon>Euarchontoglires</taxon>
        <taxon>Glires</taxon>
        <taxon>Rodentia</taxon>
        <taxon>Myomorpha</taxon>
        <taxon>Muroidea</taxon>
        <taxon>Muridae</taxon>
        <taxon>Murinae</taxon>
        <taxon>Mus</taxon>
        <taxon>Mus</taxon>
    </lineage>
</organism>
<name>S1PR4_MOUSE</name>
<comment type="function">
    <text evidence="1">Receptor for the lysosphingolipid sphingosine 1-phosphate (S1P). S1P is a bioactive lysophospholipid that elicits diverse physiological effect on most types of cells and tissues. May be involved in cell migration processes that are specific for lymphocytes (By similarity).</text>
</comment>
<comment type="subcellular location">
    <subcellularLocation>
        <location>Cell membrane</location>
        <topology>Multi-pass membrane protein</topology>
    </subcellularLocation>
</comment>
<comment type="tissue specificity">
    <text evidence="4">Specifically expressed in fetal and adult lymphoid and hematopoietic tissue. Expressed in lung, spleen, thymus and lymph node but absent in other non-lymphatic tissue. Coexpressed with GNA15 at the same relative levels in all tissues examined, with the highest levels in adult spleen and lung.</text>
</comment>
<comment type="similarity">
    <text evidence="3">Belongs to the G-protein coupled receptor 1 family.</text>
</comment>
<protein>
    <recommendedName>
        <fullName>Sphingosine 1-phosphate receptor 4</fullName>
        <shortName>S1P receptor 4</shortName>
        <shortName>S1P4</shortName>
    </recommendedName>
    <alternativeName>
        <fullName>Endothelial differentiation G-protein coupled receptor 6</fullName>
    </alternativeName>
    <alternativeName>
        <fullName>Lysophospholipid receptor C1</fullName>
    </alternativeName>
    <alternativeName>
        <fullName>Sphingosine 1-phosphate receptor Edg-6</fullName>
        <shortName>S1P receptor Edg-6</shortName>
    </alternativeName>
</protein>
<keyword id="KW-1003">Cell membrane</keyword>
<keyword id="KW-0297">G-protein coupled receptor</keyword>
<keyword id="KW-0325">Glycoprotein</keyword>
<keyword id="KW-0449">Lipoprotein</keyword>
<keyword id="KW-0472">Membrane</keyword>
<keyword id="KW-0564">Palmitate</keyword>
<keyword id="KW-0675">Receptor</keyword>
<keyword id="KW-1185">Reference proteome</keyword>
<keyword id="KW-0807">Transducer</keyword>
<keyword id="KW-0812">Transmembrane</keyword>
<keyword id="KW-1133">Transmembrane helix</keyword>
<evidence type="ECO:0000250" key="1"/>
<evidence type="ECO:0000255" key="2"/>
<evidence type="ECO:0000255" key="3">
    <source>
        <dbReference type="PROSITE-ProRule" id="PRU00521"/>
    </source>
</evidence>
<evidence type="ECO:0000269" key="4">
    <source>
    </source>
</evidence>
<evidence type="ECO:0000305" key="5"/>
<sequence length="386" mass="42263">MNISTWSTLVTPESCHRLAASGHSLLIVLHYNHSGRLASRGGSEDGGGLGMLRGPSVAAGCLVVLENAMVLAAIAIYMRSRRWVYYCLLNITLSDLLTGLAYVVNVLLSGTRTFQLSPVHWFLREGLLFMALAASTFSLLFTAGERFATMVRVAESGATKTSRVYGCIGLCWLLAAILGLLPLLGWNCVCAFPRCSSLLPLYSKGYVLFCVVVFALILVAILSLYGAIFRVVRANGQKSPRPPARRKSRRLLNTVLMILVAFVVCWGPLFGLLLADIFGSNVWAQEYLRGMDWILALAVFNSAINPLIYSFRSREVQRAVLAFLCCGCLWLGLRGPGDCLTRITEAHSGASTTDSSLRPRDSFRTSRSLSFRMREPLSSISSVRST</sequence>
<dbReference type="EMBL" id="AJ006074">
    <property type="protein sequence ID" value="CAA06847.1"/>
    <property type="molecule type" value="mRNA"/>
</dbReference>
<dbReference type="EMBL" id="AJ489247">
    <property type="protein sequence ID" value="CAD33254.1"/>
    <property type="molecule type" value="Genomic_DNA"/>
</dbReference>
<dbReference type="EMBL" id="AK154242">
    <property type="protein sequence ID" value="BAE32458.1"/>
    <property type="molecule type" value="mRNA"/>
</dbReference>
<dbReference type="EMBL" id="BC107000">
    <property type="protein sequence ID" value="AAI07001.1"/>
    <property type="molecule type" value="mRNA"/>
</dbReference>
<dbReference type="CCDS" id="CCDS24059.1"/>
<dbReference type="RefSeq" id="NP_034232.1">
    <property type="nucleotide sequence ID" value="NM_010102.2"/>
</dbReference>
<dbReference type="SMR" id="Q9Z0L1"/>
<dbReference type="FunCoup" id="Q9Z0L1">
    <property type="interactions" value="965"/>
</dbReference>
<dbReference type="STRING" id="10090.ENSMUSP00000050412"/>
<dbReference type="GuidetoPHARMACOLOGY" id="278"/>
<dbReference type="GlyCosmos" id="Q9Z0L1">
    <property type="glycosylation" value="2 sites, No reported glycans"/>
</dbReference>
<dbReference type="GlyGen" id="Q9Z0L1">
    <property type="glycosylation" value="2 sites"/>
</dbReference>
<dbReference type="PhosphoSitePlus" id="Q9Z0L1"/>
<dbReference type="PaxDb" id="10090-ENSMUSP00000050412"/>
<dbReference type="ProteomicsDB" id="256666"/>
<dbReference type="Antibodypedia" id="10967">
    <property type="antibodies" value="387 antibodies from 39 providers"/>
</dbReference>
<dbReference type="DNASU" id="13611"/>
<dbReference type="Ensembl" id="ENSMUST00000053646.7">
    <property type="protein sequence ID" value="ENSMUSP00000050412.6"/>
    <property type="gene ID" value="ENSMUSG00000044199.7"/>
</dbReference>
<dbReference type="GeneID" id="13611"/>
<dbReference type="KEGG" id="mmu:13611"/>
<dbReference type="UCSC" id="uc007gih.2">
    <property type="organism name" value="mouse"/>
</dbReference>
<dbReference type="AGR" id="MGI:1333809"/>
<dbReference type="CTD" id="8698"/>
<dbReference type="MGI" id="MGI:1333809">
    <property type="gene designation" value="S1pr4"/>
</dbReference>
<dbReference type="VEuPathDB" id="HostDB:ENSMUSG00000044199"/>
<dbReference type="eggNOG" id="ENOG502QQUE">
    <property type="taxonomic scope" value="Eukaryota"/>
</dbReference>
<dbReference type="GeneTree" id="ENSGT01050000244887"/>
<dbReference type="HOGENOM" id="CLU_047979_1_1_1"/>
<dbReference type="InParanoid" id="Q9Z0L1"/>
<dbReference type="OMA" id="PAHWFLR"/>
<dbReference type="OrthoDB" id="9930460at2759"/>
<dbReference type="PhylomeDB" id="Q9Z0L1"/>
<dbReference type="TreeFam" id="TF330052"/>
<dbReference type="Reactome" id="R-MMU-418594">
    <property type="pathway name" value="G alpha (i) signalling events"/>
</dbReference>
<dbReference type="Reactome" id="R-MMU-419408">
    <property type="pathway name" value="Lysosphingolipid and LPA receptors"/>
</dbReference>
<dbReference type="BioGRID-ORCS" id="13611">
    <property type="hits" value="2 hits in 76 CRISPR screens"/>
</dbReference>
<dbReference type="PRO" id="PR:Q9Z0L1"/>
<dbReference type="Proteomes" id="UP000000589">
    <property type="component" value="Chromosome 10"/>
</dbReference>
<dbReference type="RNAct" id="Q9Z0L1">
    <property type="molecule type" value="protein"/>
</dbReference>
<dbReference type="Bgee" id="ENSMUSG00000044199">
    <property type="expression patterns" value="Expressed in granulocyte and 83 other cell types or tissues"/>
</dbReference>
<dbReference type="GO" id="GO:0005739">
    <property type="term" value="C:mitochondrion"/>
    <property type="evidence" value="ECO:0007669"/>
    <property type="project" value="Ensembl"/>
</dbReference>
<dbReference type="GO" id="GO:0005886">
    <property type="term" value="C:plasma membrane"/>
    <property type="evidence" value="ECO:0000304"/>
    <property type="project" value="MGI"/>
</dbReference>
<dbReference type="GO" id="GO:0098793">
    <property type="term" value="C:presynapse"/>
    <property type="evidence" value="ECO:0000314"/>
    <property type="project" value="SynGO"/>
</dbReference>
<dbReference type="GO" id="GO:0004930">
    <property type="term" value="F:G protein-coupled receptor activity"/>
    <property type="evidence" value="ECO:0000304"/>
    <property type="project" value="MGI"/>
</dbReference>
<dbReference type="GO" id="GO:0038036">
    <property type="term" value="F:sphingosine-1-phosphate receptor activity"/>
    <property type="evidence" value="ECO:0007669"/>
    <property type="project" value="InterPro"/>
</dbReference>
<dbReference type="GO" id="GO:0007189">
    <property type="term" value="P:adenylate cyclase-activating G protein-coupled receptor signaling pathway"/>
    <property type="evidence" value="ECO:0000314"/>
    <property type="project" value="MGI"/>
</dbReference>
<dbReference type="FunFam" id="1.20.1070.10:FF:000305">
    <property type="entry name" value="Sphingosine 1-phosphate receptor 4"/>
    <property type="match status" value="1"/>
</dbReference>
<dbReference type="Gene3D" id="1.20.1070.10">
    <property type="entry name" value="Rhodopsin 7-helix transmembrane proteins"/>
    <property type="match status" value="1"/>
</dbReference>
<dbReference type="InterPro" id="IPR004064">
    <property type="entry name" value="EDG6_rcpt"/>
</dbReference>
<dbReference type="InterPro" id="IPR000276">
    <property type="entry name" value="GPCR_Rhodpsn"/>
</dbReference>
<dbReference type="InterPro" id="IPR017452">
    <property type="entry name" value="GPCR_Rhodpsn_7TM"/>
</dbReference>
<dbReference type="InterPro" id="IPR004061">
    <property type="entry name" value="S1P_rcpt"/>
</dbReference>
<dbReference type="PANTHER" id="PTHR22750">
    <property type="entry name" value="G-PROTEIN COUPLED RECEPTOR"/>
    <property type="match status" value="1"/>
</dbReference>
<dbReference type="Pfam" id="PF00001">
    <property type="entry name" value="7tm_1"/>
    <property type="match status" value="1"/>
</dbReference>
<dbReference type="PRINTS" id="PR01526">
    <property type="entry name" value="EDG6RECEPTOR"/>
</dbReference>
<dbReference type="PRINTS" id="PR00237">
    <property type="entry name" value="GPCRRHODOPSN"/>
</dbReference>
<dbReference type="PRINTS" id="PR01523">
    <property type="entry name" value="S1PRECEPTOR"/>
</dbReference>
<dbReference type="SUPFAM" id="SSF81321">
    <property type="entry name" value="Family A G protein-coupled receptor-like"/>
    <property type="match status" value="1"/>
</dbReference>
<dbReference type="PROSITE" id="PS50262">
    <property type="entry name" value="G_PROTEIN_RECEP_F1_2"/>
    <property type="match status" value="1"/>
</dbReference>
<proteinExistence type="evidence at transcript level"/>
<reference key="1">
    <citation type="journal article" date="1998" name="Genomics">
        <title>EDG6, a novel G protein-coupled receptor related to receptors for bioactive lysophospholipids, is specifically expressed in lymphoid tissue.</title>
        <authorList>
            <person name="Graeler M.H."/>
            <person name="Bernhardt G."/>
            <person name="Lipp M."/>
        </authorList>
    </citation>
    <scope>NUCLEOTIDE SEQUENCE [MRNA]</scope>
    <source>
        <strain>BALB/cJ</strain>
        <tissue>Fetal skin</tissue>
    </source>
</reference>
<reference key="2">
    <citation type="journal article" date="2002" name="FEBS Lett.">
        <title>Tandem genomic arrangement of a G protein (Gna15) and G protein-coupled receptor (s1p(4)/lp(C1)/Edg6) gene.</title>
        <authorList>
            <person name="Contos J.J.A."/>
            <person name="Ye X."/>
            <person name="Sah V.P."/>
            <person name="Chun J."/>
        </authorList>
    </citation>
    <scope>NUCLEOTIDE SEQUENCE [GENOMIC DNA]</scope>
    <scope>TISSUE SPECIFICITY</scope>
</reference>
<reference key="3">
    <citation type="journal article" date="2005" name="Science">
        <title>The transcriptional landscape of the mammalian genome.</title>
        <authorList>
            <person name="Carninci P."/>
            <person name="Kasukawa T."/>
            <person name="Katayama S."/>
            <person name="Gough J."/>
            <person name="Frith M.C."/>
            <person name="Maeda N."/>
            <person name="Oyama R."/>
            <person name="Ravasi T."/>
            <person name="Lenhard B."/>
            <person name="Wells C."/>
            <person name="Kodzius R."/>
            <person name="Shimokawa K."/>
            <person name="Bajic V.B."/>
            <person name="Brenner S.E."/>
            <person name="Batalov S."/>
            <person name="Forrest A.R."/>
            <person name="Zavolan M."/>
            <person name="Davis M.J."/>
            <person name="Wilming L.G."/>
            <person name="Aidinis V."/>
            <person name="Allen J.E."/>
            <person name="Ambesi-Impiombato A."/>
            <person name="Apweiler R."/>
            <person name="Aturaliya R.N."/>
            <person name="Bailey T.L."/>
            <person name="Bansal M."/>
            <person name="Baxter L."/>
            <person name="Beisel K.W."/>
            <person name="Bersano T."/>
            <person name="Bono H."/>
            <person name="Chalk A.M."/>
            <person name="Chiu K.P."/>
            <person name="Choudhary V."/>
            <person name="Christoffels A."/>
            <person name="Clutterbuck D.R."/>
            <person name="Crowe M.L."/>
            <person name="Dalla E."/>
            <person name="Dalrymple B.P."/>
            <person name="de Bono B."/>
            <person name="Della Gatta G."/>
            <person name="di Bernardo D."/>
            <person name="Down T."/>
            <person name="Engstrom P."/>
            <person name="Fagiolini M."/>
            <person name="Faulkner G."/>
            <person name="Fletcher C.F."/>
            <person name="Fukushima T."/>
            <person name="Furuno M."/>
            <person name="Futaki S."/>
            <person name="Gariboldi M."/>
            <person name="Georgii-Hemming P."/>
            <person name="Gingeras T.R."/>
            <person name="Gojobori T."/>
            <person name="Green R.E."/>
            <person name="Gustincich S."/>
            <person name="Harbers M."/>
            <person name="Hayashi Y."/>
            <person name="Hensch T.K."/>
            <person name="Hirokawa N."/>
            <person name="Hill D."/>
            <person name="Huminiecki L."/>
            <person name="Iacono M."/>
            <person name="Ikeo K."/>
            <person name="Iwama A."/>
            <person name="Ishikawa T."/>
            <person name="Jakt M."/>
            <person name="Kanapin A."/>
            <person name="Katoh M."/>
            <person name="Kawasawa Y."/>
            <person name="Kelso J."/>
            <person name="Kitamura H."/>
            <person name="Kitano H."/>
            <person name="Kollias G."/>
            <person name="Krishnan S.P."/>
            <person name="Kruger A."/>
            <person name="Kummerfeld S.K."/>
            <person name="Kurochkin I.V."/>
            <person name="Lareau L.F."/>
            <person name="Lazarevic D."/>
            <person name="Lipovich L."/>
            <person name="Liu J."/>
            <person name="Liuni S."/>
            <person name="McWilliam S."/>
            <person name="Madan Babu M."/>
            <person name="Madera M."/>
            <person name="Marchionni L."/>
            <person name="Matsuda H."/>
            <person name="Matsuzawa S."/>
            <person name="Miki H."/>
            <person name="Mignone F."/>
            <person name="Miyake S."/>
            <person name="Morris K."/>
            <person name="Mottagui-Tabar S."/>
            <person name="Mulder N."/>
            <person name="Nakano N."/>
            <person name="Nakauchi H."/>
            <person name="Ng P."/>
            <person name="Nilsson R."/>
            <person name="Nishiguchi S."/>
            <person name="Nishikawa S."/>
            <person name="Nori F."/>
            <person name="Ohara O."/>
            <person name="Okazaki Y."/>
            <person name="Orlando V."/>
            <person name="Pang K.C."/>
            <person name="Pavan W.J."/>
            <person name="Pavesi G."/>
            <person name="Pesole G."/>
            <person name="Petrovsky N."/>
            <person name="Piazza S."/>
            <person name="Reed J."/>
            <person name="Reid J.F."/>
            <person name="Ring B.Z."/>
            <person name="Ringwald M."/>
            <person name="Rost B."/>
            <person name="Ruan Y."/>
            <person name="Salzberg S.L."/>
            <person name="Sandelin A."/>
            <person name="Schneider C."/>
            <person name="Schoenbach C."/>
            <person name="Sekiguchi K."/>
            <person name="Semple C.A."/>
            <person name="Seno S."/>
            <person name="Sessa L."/>
            <person name="Sheng Y."/>
            <person name="Shibata Y."/>
            <person name="Shimada H."/>
            <person name="Shimada K."/>
            <person name="Silva D."/>
            <person name="Sinclair B."/>
            <person name="Sperling S."/>
            <person name="Stupka E."/>
            <person name="Sugiura K."/>
            <person name="Sultana R."/>
            <person name="Takenaka Y."/>
            <person name="Taki K."/>
            <person name="Tammoja K."/>
            <person name="Tan S.L."/>
            <person name="Tang S."/>
            <person name="Taylor M.S."/>
            <person name="Tegner J."/>
            <person name="Teichmann S.A."/>
            <person name="Ueda H.R."/>
            <person name="van Nimwegen E."/>
            <person name="Verardo R."/>
            <person name="Wei C.L."/>
            <person name="Yagi K."/>
            <person name="Yamanishi H."/>
            <person name="Zabarovsky E."/>
            <person name="Zhu S."/>
            <person name="Zimmer A."/>
            <person name="Hide W."/>
            <person name="Bult C."/>
            <person name="Grimmond S.M."/>
            <person name="Teasdale R.D."/>
            <person name="Liu E.T."/>
            <person name="Brusic V."/>
            <person name="Quackenbush J."/>
            <person name="Wahlestedt C."/>
            <person name="Mattick J.S."/>
            <person name="Hume D.A."/>
            <person name="Kai C."/>
            <person name="Sasaki D."/>
            <person name="Tomaru Y."/>
            <person name="Fukuda S."/>
            <person name="Kanamori-Katayama M."/>
            <person name="Suzuki M."/>
            <person name="Aoki J."/>
            <person name="Arakawa T."/>
            <person name="Iida J."/>
            <person name="Imamura K."/>
            <person name="Itoh M."/>
            <person name="Kato T."/>
            <person name="Kawaji H."/>
            <person name="Kawagashira N."/>
            <person name="Kawashima T."/>
            <person name="Kojima M."/>
            <person name="Kondo S."/>
            <person name="Konno H."/>
            <person name="Nakano K."/>
            <person name="Ninomiya N."/>
            <person name="Nishio T."/>
            <person name="Okada M."/>
            <person name="Plessy C."/>
            <person name="Shibata K."/>
            <person name="Shiraki T."/>
            <person name="Suzuki S."/>
            <person name="Tagami M."/>
            <person name="Waki K."/>
            <person name="Watahiki A."/>
            <person name="Okamura-Oho Y."/>
            <person name="Suzuki H."/>
            <person name="Kawai J."/>
            <person name="Hayashizaki Y."/>
        </authorList>
    </citation>
    <scope>NUCLEOTIDE SEQUENCE [LARGE SCALE MRNA]</scope>
    <source>
        <strain>NOD</strain>
        <tissue>Dendritic cell</tissue>
    </source>
</reference>
<reference key="4">
    <citation type="journal article" date="2004" name="Genome Res.">
        <title>The status, quality, and expansion of the NIH full-length cDNA project: the Mammalian Gene Collection (MGC).</title>
        <authorList>
            <consortium name="The MGC Project Team"/>
        </authorList>
    </citation>
    <scope>NUCLEOTIDE SEQUENCE [LARGE SCALE MRNA]</scope>
</reference>
<feature type="chain" id="PRO_0000069432" description="Sphingosine 1-phosphate receptor 4">
    <location>
        <begin position="1"/>
        <end position="386"/>
    </location>
</feature>
<feature type="topological domain" description="Extracellular" evidence="1">
    <location>
        <begin position="1"/>
        <end position="56"/>
    </location>
</feature>
<feature type="transmembrane region" description="Helical; Name=1" evidence="1">
    <location>
        <begin position="57"/>
        <end position="77"/>
    </location>
</feature>
<feature type="topological domain" description="Cytoplasmic" evidence="1">
    <location>
        <begin position="78"/>
        <end position="87"/>
    </location>
</feature>
<feature type="transmembrane region" description="Helical; Name=2" evidence="1">
    <location>
        <begin position="88"/>
        <end position="108"/>
    </location>
</feature>
<feature type="topological domain" description="Extracellular" evidence="1">
    <location>
        <begin position="109"/>
        <end position="120"/>
    </location>
</feature>
<feature type="transmembrane region" description="Helical; Name=3" evidence="1">
    <location>
        <begin position="121"/>
        <end position="141"/>
    </location>
</feature>
<feature type="topological domain" description="Cytoplasmic" evidence="1">
    <location>
        <begin position="142"/>
        <end position="163"/>
    </location>
</feature>
<feature type="transmembrane region" description="Helical; Name=4" evidence="1">
    <location>
        <begin position="164"/>
        <end position="184"/>
    </location>
</feature>
<feature type="topological domain" description="Extracellular" evidence="1">
    <location>
        <begin position="185"/>
        <end position="208"/>
    </location>
</feature>
<feature type="transmembrane region" description="Helical; Name=5" evidence="1">
    <location>
        <begin position="209"/>
        <end position="229"/>
    </location>
</feature>
<feature type="topological domain" description="Cytoplasmic" evidence="1">
    <location>
        <begin position="230"/>
        <end position="254"/>
    </location>
</feature>
<feature type="transmembrane region" description="Helical; Name=6" evidence="1">
    <location>
        <begin position="255"/>
        <end position="275"/>
    </location>
</feature>
<feature type="topological domain" description="Extracellular" evidence="1">
    <location>
        <begin position="276"/>
        <end position="290"/>
    </location>
</feature>
<feature type="transmembrane region" description="Helical; Name=7" evidence="1">
    <location>
        <begin position="291"/>
        <end position="311"/>
    </location>
</feature>
<feature type="topological domain" description="Cytoplasmic" evidence="1">
    <location>
        <begin position="312"/>
        <end position="386"/>
    </location>
</feature>
<feature type="lipid moiety-binding region" description="S-palmitoyl cysteine" evidence="1">
    <location>
        <position position="325"/>
    </location>
</feature>
<feature type="glycosylation site" description="N-linked (GlcNAc...) asparagine" evidence="2">
    <location>
        <position position="2"/>
    </location>
</feature>
<feature type="glycosylation site" description="N-linked (GlcNAc...) asparagine" evidence="2">
    <location>
        <position position="32"/>
    </location>
</feature>
<feature type="sequence conflict" description="In Ref. 2; CAD33254." evidence="5" ref="2">
    <original>R</original>
    <variation>A</variation>
    <location>
        <position position="146"/>
    </location>
</feature>